<evidence type="ECO:0000255" key="1">
    <source>
        <dbReference type="HAMAP-Rule" id="MF_01351"/>
    </source>
</evidence>
<protein>
    <recommendedName>
        <fullName evidence="1">NAD(P)H-quinone oxidoreductase subunit I, chloroplastic</fullName>
        <ecNumber evidence="1">7.1.1.-</ecNumber>
    </recommendedName>
    <alternativeName>
        <fullName evidence="1">NAD(P)H dehydrogenase subunit I</fullName>
        <shortName evidence="1">NDH subunit I</shortName>
    </alternativeName>
    <alternativeName>
        <fullName evidence="1">NADH-plastoquinone oxidoreductase subunit I</fullName>
    </alternativeName>
</protein>
<reference key="1">
    <citation type="journal article" date="2006" name="Genes Genet. Syst.">
        <title>Complete nucleotide sequence of the cotton (Gossypium barbadense L.) chloroplast genome with a comparative analysis of sequences among 9 dicot plants.</title>
        <authorList>
            <person name="Ibrahim R.I.H."/>
            <person name="Azuma J."/>
            <person name="Sakamoto M."/>
        </authorList>
    </citation>
    <scope>NUCLEOTIDE SEQUENCE [LARGE SCALE GENOMIC DNA]</scope>
</reference>
<geneLocation type="chloroplast"/>
<name>NDHI_GOSBA</name>
<comment type="function">
    <text evidence="1">NDH shuttles electrons from NAD(P)H:plastoquinone, via FMN and iron-sulfur (Fe-S) centers, to quinones in the photosynthetic chain and possibly in a chloroplast respiratory chain. The immediate electron acceptor for the enzyme in this species is believed to be plastoquinone. Couples the redox reaction to proton translocation, and thus conserves the redox energy in a proton gradient.</text>
</comment>
<comment type="catalytic activity">
    <reaction evidence="1">
        <text>a plastoquinone + NADH + (n+1) H(+)(in) = a plastoquinol + NAD(+) + n H(+)(out)</text>
        <dbReference type="Rhea" id="RHEA:42608"/>
        <dbReference type="Rhea" id="RHEA-COMP:9561"/>
        <dbReference type="Rhea" id="RHEA-COMP:9562"/>
        <dbReference type="ChEBI" id="CHEBI:15378"/>
        <dbReference type="ChEBI" id="CHEBI:17757"/>
        <dbReference type="ChEBI" id="CHEBI:57540"/>
        <dbReference type="ChEBI" id="CHEBI:57945"/>
        <dbReference type="ChEBI" id="CHEBI:62192"/>
    </reaction>
</comment>
<comment type="catalytic activity">
    <reaction evidence="1">
        <text>a plastoquinone + NADPH + (n+1) H(+)(in) = a plastoquinol + NADP(+) + n H(+)(out)</text>
        <dbReference type="Rhea" id="RHEA:42612"/>
        <dbReference type="Rhea" id="RHEA-COMP:9561"/>
        <dbReference type="Rhea" id="RHEA-COMP:9562"/>
        <dbReference type="ChEBI" id="CHEBI:15378"/>
        <dbReference type="ChEBI" id="CHEBI:17757"/>
        <dbReference type="ChEBI" id="CHEBI:57783"/>
        <dbReference type="ChEBI" id="CHEBI:58349"/>
        <dbReference type="ChEBI" id="CHEBI:62192"/>
    </reaction>
</comment>
<comment type="cofactor">
    <cofactor evidence="1">
        <name>[4Fe-4S] cluster</name>
        <dbReference type="ChEBI" id="CHEBI:49883"/>
    </cofactor>
    <text evidence="1">Binds 2 [4Fe-4S] clusters per subunit.</text>
</comment>
<comment type="subunit">
    <text evidence="1">NDH is composed of at least 16 different subunits, 5 of which are encoded in the nucleus.</text>
</comment>
<comment type="subcellular location">
    <subcellularLocation>
        <location evidence="1">Plastid</location>
        <location evidence="1">Chloroplast thylakoid membrane</location>
        <topology evidence="1">Peripheral membrane protein</topology>
    </subcellularLocation>
</comment>
<comment type="similarity">
    <text evidence="1">Belongs to the complex I 23 kDa subunit family.</text>
</comment>
<feature type="chain" id="PRO_0000275474" description="NAD(P)H-quinone oxidoreductase subunit I, chloroplastic">
    <location>
        <begin position="1"/>
        <end position="167"/>
    </location>
</feature>
<feature type="domain" description="4Fe-4S ferredoxin-type 1" evidence="1">
    <location>
        <begin position="55"/>
        <end position="84"/>
    </location>
</feature>
<feature type="domain" description="4Fe-4S ferredoxin-type 2" evidence="1">
    <location>
        <begin position="95"/>
        <end position="124"/>
    </location>
</feature>
<feature type="binding site" evidence="1">
    <location>
        <position position="64"/>
    </location>
    <ligand>
        <name>[4Fe-4S] cluster</name>
        <dbReference type="ChEBI" id="CHEBI:49883"/>
        <label>1</label>
    </ligand>
</feature>
<feature type="binding site" evidence="1">
    <location>
        <position position="67"/>
    </location>
    <ligand>
        <name>[4Fe-4S] cluster</name>
        <dbReference type="ChEBI" id="CHEBI:49883"/>
        <label>1</label>
    </ligand>
</feature>
<feature type="binding site" evidence="1">
    <location>
        <position position="70"/>
    </location>
    <ligand>
        <name>[4Fe-4S] cluster</name>
        <dbReference type="ChEBI" id="CHEBI:49883"/>
        <label>1</label>
    </ligand>
</feature>
<feature type="binding site" evidence="1">
    <location>
        <position position="74"/>
    </location>
    <ligand>
        <name>[4Fe-4S] cluster</name>
        <dbReference type="ChEBI" id="CHEBI:49883"/>
        <label>2</label>
    </ligand>
</feature>
<feature type="binding site" evidence="1">
    <location>
        <position position="104"/>
    </location>
    <ligand>
        <name>[4Fe-4S] cluster</name>
        <dbReference type="ChEBI" id="CHEBI:49883"/>
        <label>2</label>
    </ligand>
</feature>
<feature type="binding site" evidence="1">
    <location>
        <position position="107"/>
    </location>
    <ligand>
        <name>[4Fe-4S] cluster</name>
        <dbReference type="ChEBI" id="CHEBI:49883"/>
        <label>2</label>
    </ligand>
</feature>
<feature type="binding site" evidence="1">
    <location>
        <position position="110"/>
    </location>
    <ligand>
        <name>[4Fe-4S] cluster</name>
        <dbReference type="ChEBI" id="CHEBI:49883"/>
        <label>2</label>
    </ligand>
</feature>
<feature type="binding site" evidence="1">
    <location>
        <position position="114"/>
    </location>
    <ligand>
        <name>[4Fe-4S] cluster</name>
        <dbReference type="ChEBI" id="CHEBI:49883"/>
        <label>1</label>
    </ligand>
</feature>
<sequence>MFPMVTGFMNYGHQTVRAARYIGQGFMITLSHANRLPVTIQYPYEKLITSERFRGRIHFEFDKCIACEVCVRVCPIDLPVVDWKFETDIRKKRLLNYSIDFGICIFCGNCVEYCPTNCLSMTEEYELSTYDRHELNYNQIALGRLPMSVIDDYTIRTVLNSIQRKTQ</sequence>
<organism>
    <name type="scientific">Gossypium barbadense</name>
    <name type="common">Sea Island cotton</name>
    <name type="synonym">Hibiscus barbadensis</name>
    <dbReference type="NCBI Taxonomy" id="3634"/>
    <lineage>
        <taxon>Eukaryota</taxon>
        <taxon>Viridiplantae</taxon>
        <taxon>Streptophyta</taxon>
        <taxon>Embryophyta</taxon>
        <taxon>Tracheophyta</taxon>
        <taxon>Spermatophyta</taxon>
        <taxon>Magnoliopsida</taxon>
        <taxon>eudicotyledons</taxon>
        <taxon>Gunneridae</taxon>
        <taxon>Pentapetalae</taxon>
        <taxon>rosids</taxon>
        <taxon>malvids</taxon>
        <taxon>Malvales</taxon>
        <taxon>Malvaceae</taxon>
        <taxon>Malvoideae</taxon>
        <taxon>Gossypium</taxon>
    </lineage>
</organism>
<dbReference type="EC" id="7.1.1.-" evidence="1"/>
<dbReference type="EMBL" id="AP009123">
    <property type="protein sequence ID" value="BAF41301.1"/>
    <property type="molecule type" value="Genomic_DNA"/>
</dbReference>
<dbReference type="RefSeq" id="YP_913240.1">
    <property type="nucleotide sequence ID" value="NC_008641.1"/>
</dbReference>
<dbReference type="SMR" id="A0ZZ89"/>
<dbReference type="GeneID" id="4575202"/>
<dbReference type="GO" id="GO:0009535">
    <property type="term" value="C:chloroplast thylakoid membrane"/>
    <property type="evidence" value="ECO:0007669"/>
    <property type="project" value="UniProtKB-SubCell"/>
</dbReference>
<dbReference type="GO" id="GO:0051539">
    <property type="term" value="F:4 iron, 4 sulfur cluster binding"/>
    <property type="evidence" value="ECO:0007669"/>
    <property type="project" value="UniProtKB-KW"/>
</dbReference>
<dbReference type="GO" id="GO:0005506">
    <property type="term" value="F:iron ion binding"/>
    <property type="evidence" value="ECO:0007669"/>
    <property type="project" value="UniProtKB-UniRule"/>
</dbReference>
<dbReference type="GO" id="GO:0008137">
    <property type="term" value="F:NADH dehydrogenase (ubiquinone) activity"/>
    <property type="evidence" value="ECO:0007669"/>
    <property type="project" value="InterPro"/>
</dbReference>
<dbReference type="GO" id="GO:0048038">
    <property type="term" value="F:quinone binding"/>
    <property type="evidence" value="ECO:0007669"/>
    <property type="project" value="UniProtKB-KW"/>
</dbReference>
<dbReference type="GO" id="GO:0019684">
    <property type="term" value="P:photosynthesis, light reaction"/>
    <property type="evidence" value="ECO:0007669"/>
    <property type="project" value="UniProtKB-UniRule"/>
</dbReference>
<dbReference type="FunFam" id="3.30.70.3270:FF:000006">
    <property type="entry name" value="NAD(P)H-quinone oxidoreductase subunit I, chloroplastic"/>
    <property type="match status" value="1"/>
</dbReference>
<dbReference type="Gene3D" id="3.30.70.3270">
    <property type="match status" value="1"/>
</dbReference>
<dbReference type="HAMAP" id="MF_01351">
    <property type="entry name" value="NDH1_NuoI"/>
    <property type="match status" value="1"/>
</dbReference>
<dbReference type="InterPro" id="IPR017896">
    <property type="entry name" value="4Fe4S_Fe-S-bd"/>
</dbReference>
<dbReference type="InterPro" id="IPR017900">
    <property type="entry name" value="4Fe4S_Fe_S_CS"/>
</dbReference>
<dbReference type="InterPro" id="IPR010226">
    <property type="entry name" value="NADH_quinone_OxRdtase_chainI"/>
</dbReference>
<dbReference type="InterPro" id="IPR004497">
    <property type="entry name" value="NDHI"/>
</dbReference>
<dbReference type="NCBIfam" id="TIGR00403">
    <property type="entry name" value="ndhI"/>
    <property type="match status" value="1"/>
</dbReference>
<dbReference type="NCBIfam" id="TIGR01971">
    <property type="entry name" value="NuoI"/>
    <property type="match status" value="1"/>
</dbReference>
<dbReference type="NCBIfam" id="NF004537">
    <property type="entry name" value="PRK05888.1-3"/>
    <property type="match status" value="1"/>
</dbReference>
<dbReference type="PANTHER" id="PTHR47275">
    <property type="entry name" value="NAD(P)H-QUINONE OXIDOREDUCTASE SUBUNIT I, CHLOROPLASTIC"/>
    <property type="match status" value="1"/>
</dbReference>
<dbReference type="PANTHER" id="PTHR47275:SF1">
    <property type="entry name" value="NAD(P)H-QUINONE OXIDOREDUCTASE SUBUNIT I, CHLOROPLASTIC"/>
    <property type="match status" value="1"/>
</dbReference>
<dbReference type="Pfam" id="PF12838">
    <property type="entry name" value="Fer4_7"/>
    <property type="match status" value="1"/>
</dbReference>
<dbReference type="SUPFAM" id="SSF54862">
    <property type="entry name" value="4Fe-4S ferredoxins"/>
    <property type="match status" value="1"/>
</dbReference>
<dbReference type="PROSITE" id="PS00198">
    <property type="entry name" value="4FE4S_FER_1"/>
    <property type="match status" value="2"/>
</dbReference>
<dbReference type="PROSITE" id="PS51379">
    <property type="entry name" value="4FE4S_FER_2"/>
    <property type="match status" value="2"/>
</dbReference>
<gene>
    <name evidence="1" type="primary">ndhI</name>
</gene>
<accession>A0ZZ89</accession>
<proteinExistence type="inferred from homology"/>
<keyword id="KW-0004">4Fe-4S</keyword>
<keyword id="KW-0150">Chloroplast</keyword>
<keyword id="KW-0408">Iron</keyword>
<keyword id="KW-0411">Iron-sulfur</keyword>
<keyword id="KW-0472">Membrane</keyword>
<keyword id="KW-0479">Metal-binding</keyword>
<keyword id="KW-0520">NAD</keyword>
<keyword id="KW-0521">NADP</keyword>
<keyword id="KW-0934">Plastid</keyword>
<keyword id="KW-0618">Plastoquinone</keyword>
<keyword id="KW-0874">Quinone</keyword>
<keyword id="KW-0677">Repeat</keyword>
<keyword id="KW-0793">Thylakoid</keyword>
<keyword id="KW-1278">Translocase</keyword>